<reference key="1">
    <citation type="journal article" date="2000" name="Nature">
        <title>Sequence and analysis of chromosome 1 of the plant Arabidopsis thaliana.</title>
        <authorList>
            <person name="Theologis A."/>
            <person name="Ecker J.R."/>
            <person name="Palm C.J."/>
            <person name="Federspiel N.A."/>
            <person name="Kaul S."/>
            <person name="White O."/>
            <person name="Alonso J."/>
            <person name="Altafi H."/>
            <person name="Araujo R."/>
            <person name="Bowman C.L."/>
            <person name="Brooks S.Y."/>
            <person name="Buehler E."/>
            <person name="Chan A."/>
            <person name="Chao Q."/>
            <person name="Chen H."/>
            <person name="Cheuk R.F."/>
            <person name="Chin C.W."/>
            <person name="Chung M.K."/>
            <person name="Conn L."/>
            <person name="Conway A.B."/>
            <person name="Conway A.R."/>
            <person name="Creasy T.H."/>
            <person name="Dewar K."/>
            <person name="Dunn P."/>
            <person name="Etgu P."/>
            <person name="Feldblyum T.V."/>
            <person name="Feng J.-D."/>
            <person name="Fong B."/>
            <person name="Fujii C.Y."/>
            <person name="Gill J.E."/>
            <person name="Goldsmith A.D."/>
            <person name="Haas B."/>
            <person name="Hansen N.F."/>
            <person name="Hughes B."/>
            <person name="Huizar L."/>
            <person name="Hunter J.L."/>
            <person name="Jenkins J."/>
            <person name="Johnson-Hopson C."/>
            <person name="Khan S."/>
            <person name="Khaykin E."/>
            <person name="Kim C.J."/>
            <person name="Koo H.L."/>
            <person name="Kremenetskaia I."/>
            <person name="Kurtz D.B."/>
            <person name="Kwan A."/>
            <person name="Lam B."/>
            <person name="Langin-Hooper S."/>
            <person name="Lee A."/>
            <person name="Lee J.M."/>
            <person name="Lenz C.A."/>
            <person name="Li J.H."/>
            <person name="Li Y.-P."/>
            <person name="Lin X."/>
            <person name="Liu S.X."/>
            <person name="Liu Z.A."/>
            <person name="Luros J.S."/>
            <person name="Maiti R."/>
            <person name="Marziali A."/>
            <person name="Militscher J."/>
            <person name="Miranda M."/>
            <person name="Nguyen M."/>
            <person name="Nierman W.C."/>
            <person name="Osborne B.I."/>
            <person name="Pai G."/>
            <person name="Peterson J."/>
            <person name="Pham P.K."/>
            <person name="Rizzo M."/>
            <person name="Rooney T."/>
            <person name="Rowley D."/>
            <person name="Sakano H."/>
            <person name="Salzberg S.L."/>
            <person name="Schwartz J.R."/>
            <person name="Shinn P."/>
            <person name="Southwick A.M."/>
            <person name="Sun H."/>
            <person name="Tallon L.J."/>
            <person name="Tambunga G."/>
            <person name="Toriumi M.J."/>
            <person name="Town C.D."/>
            <person name="Utterback T."/>
            <person name="Van Aken S."/>
            <person name="Vaysberg M."/>
            <person name="Vysotskaia V.S."/>
            <person name="Walker M."/>
            <person name="Wu D."/>
            <person name="Yu G."/>
            <person name="Fraser C.M."/>
            <person name="Venter J.C."/>
            <person name="Davis R.W."/>
        </authorList>
    </citation>
    <scope>NUCLEOTIDE SEQUENCE [LARGE SCALE GENOMIC DNA]</scope>
    <source>
        <strain>cv. Columbia</strain>
    </source>
</reference>
<reference key="2">
    <citation type="journal article" date="2017" name="Plant J.">
        <title>Araport11: a complete reannotation of the Arabidopsis thaliana reference genome.</title>
        <authorList>
            <person name="Cheng C.Y."/>
            <person name="Krishnakumar V."/>
            <person name="Chan A.P."/>
            <person name="Thibaud-Nissen F."/>
            <person name="Schobel S."/>
            <person name="Town C.D."/>
        </authorList>
    </citation>
    <scope>GENOME REANNOTATION</scope>
    <source>
        <strain>cv. Columbia</strain>
    </source>
</reference>
<reference key="3">
    <citation type="journal article" date="2003" name="Science">
        <title>Empirical analysis of transcriptional activity in the Arabidopsis genome.</title>
        <authorList>
            <person name="Yamada K."/>
            <person name="Lim J."/>
            <person name="Dale J.M."/>
            <person name="Chen H."/>
            <person name="Shinn P."/>
            <person name="Palm C.J."/>
            <person name="Southwick A.M."/>
            <person name="Wu H.C."/>
            <person name="Kim C.J."/>
            <person name="Nguyen M."/>
            <person name="Pham P.K."/>
            <person name="Cheuk R.F."/>
            <person name="Karlin-Newmann G."/>
            <person name="Liu S.X."/>
            <person name="Lam B."/>
            <person name="Sakano H."/>
            <person name="Wu T."/>
            <person name="Yu G."/>
            <person name="Miranda M."/>
            <person name="Quach H.L."/>
            <person name="Tripp M."/>
            <person name="Chang C.H."/>
            <person name="Lee J.M."/>
            <person name="Toriumi M.J."/>
            <person name="Chan M.M."/>
            <person name="Tang C.C."/>
            <person name="Onodera C.S."/>
            <person name="Deng J.M."/>
            <person name="Akiyama K."/>
            <person name="Ansari Y."/>
            <person name="Arakawa T."/>
            <person name="Banh J."/>
            <person name="Banno F."/>
            <person name="Bowser L."/>
            <person name="Brooks S.Y."/>
            <person name="Carninci P."/>
            <person name="Chao Q."/>
            <person name="Choy N."/>
            <person name="Enju A."/>
            <person name="Goldsmith A.D."/>
            <person name="Gurjal M."/>
            <person name="Hansen N.F."/>
            <person name="Hayashizaki Y."/>
            <person name="Johnson-Hopson C."/>
            <person name="Hsuan V.W."/>
            <person name="Iida K."/>
            <person name="Karnes M."/>
            <person name="Khan S."/>
            <person name="Koesema E."/>
            <person name="Ishida J."/>
            <person name="Jiang P.X."/>
            <person name="Jones T."/>
            <person name="Kawai J."/>
            <person name="Kamiya A."/>
            <person name="Meyers C."/>
            <person name="Nakajima M."/>
            <person name="Narusaka M."/>
            <person name="Seki M."/>
            <person name="Sakurai T."/>
            <person name="Satou M."/>
            <person name="Tamse R."/>
            <person name="Vaysberg M."/>
            <person name="Wallender E.K."/>
            <person name="Wong C."/>
            <person name="Yamamura Y."/>
            <person name="Yuan S."/>
            <person name="Shinozaki K."/>
            <person name="Davis R.W."/>
            <person name="Theologis A."/>
            <person name="Ecker J.R."/>
        </authorList>
    </citation>
    <scope>NUCLEOTIDE SEQUENCE [LARGE SCALE MRNA]</scope>
    <source>
        <strain>cv. Columbia</strain>
    </source>
</reference>
<reference key="4">
    <citation type="submission" date="2002-03" db="EMBL/GenBank/DDBJ databases">
        <title>Full-length cDNA from Arabidopsis thaliana.</title>
        <authorList>
            <person name="Brover V.V."/>
            <person name="Troukhan M.E."/>
            <person name="Alexandrov N.A."/>
            <person name="Lu Y.-P."/>
            <person name="Flavell R.B."/>
            <person name="Feldmann K.A."/>
        </authorList>
    </citation>
    <scope>NUCLEOTIDE SEQUENCE [LARGE SCALE MRNA]</scope>
</reference>
<reference key="5">
    <citation type="journal article" date="2004" name="Prog. Lipid Res.">
        <title>GDSL family of serine esterases/lipases.</title>
        <authorList>
            <person name="Akoh C.C."/>
            <person name="Lee G.-C."/>
            <person name="Liaw Y.-C."/>
            <person name="Huang T.-H."/>
            <person name="Shaw J.-F."/>
        </authorList>
    </citation>
    <scope>REVIEW</scope>
</reference>
<reference key="6">
    <citation type="journal article" date="2008" name="Pak. J. Biol. Sci.">
        <title>Sequence analysis of GDSL lipase gene family in Arabidopsis thaliana.</title>
        <authorList>
            <person name="Ling H."/>
        </authorList>
    </citation>
    <scope>GENE FAMILY</scope>
</reference>
<reference key="7">
    <citation type="journal article" date="2008" name="Plant Cell Physiol.">
        <title>Antagonistic jacalin-related lectins regulate the size of ER body-type beta-glucosidase complexes in Arabidopsis thaliana.</title>
        <authorList>
            <person name="Nagano A.J."/>
            <person name="Fukao Y."/>
            <person name="Fujiwara M."/>
            <person name="Nishimura M."/>
            <person name="Hara-Nishimura I."/>
        </authorList>
    </citation>
    <scope>GENE FAMILY</scope>
    <scope>NOMENCLATURE</scope>
</reference>
<reference key="8">
    <citation type="journal article" date="2010" name="Plant J.">
        <title>A missense mutation in the vacuolar protein GOLD36 causes organizational defects in the ER and aberrant protein trafficking in the plant secretory pathway.</title>
        <authorList>
            <person name="Marti L."/>
            <person name="Stefano G."/>
            <person name="Tamura K."/>
            <person name="Hawes C."/>
            <person name="Renna L."/>
            <person name="Held M.A."/>
            <person name="Brandizzi F."/>
        </authorList>
    </citation>
    <scope>FUNCTION</scope>
    <scope>SUBCELLULAR LOCATION</scope>
    <scope>MUTAGENESIS OF PRO-80</scope>
    <scope>DISRUPTION PHENOTYPE</scope>
</reference>
<reference key="9">
    <citation type="journal article" date="2010" name="Plant Physiol.">
        <title>MODIFIED VACUOLE PHENOTYPE1 is an Arabidopsis myrosinase-associated protein involved in endomembrane protein trafficking.</title>
        <authorList>
            <person name="Agee A.E."/>
            <person name="Surpin M."/>
            <person name="Sohn E.J."/>
            <person name="Girke T."/>
            <person name="Rosado A."/>
            <person name="Kram B.W."/>
            <person name="Carter C."/>
            <person name="Wentzell A.M."/>
            <person name="Kliebenstein D.J."/>
            <person name="Jin H.C."/>
            <person name="Park O.K."/>
            <person name="Jin H."/>
            <person name="Hicks G.R."/>
            <person name="Raikhel N.V."/>
        </authorList>
    </citation>
    <scope>FUNCTION</scope>
    <scope>MUTAGENESIS OF GLY-57</scope>
    <scope>DISRUPTION PHENOTYPE</scope>
    <scope>TISSUE SPECIFICITY</scope>
    <scope>DEVELOPMENTAL STAGE</scope>
    <scope>INDUCTION BY PATHOGENS AND METHYL JASMONATE</scope>
    <scope>INTERACTION WITH TGG2</scope>
    <scope>SUBCELLULAR LOCATION</scope>
</reference>
<reference key="10">
    <citation type="journal article" date="2012" name="PLoS ONE">
        <title>ERMO3/MVP1/GOLD36 is involved in a cell type-specific mechanism for maintaining ER morphology in Arabidopsis thaliana.</title>
        <authorList>
            <person name="Nakano R.T."/>
            <person name="Matsushima R."/>
            <person name="Nagano A.J."/>
            <person name="Fukao Y."/>
            <person name="Fujiwara M."/>
            <person name="Kondo M."/>
            <person name="Nishimura M."/>
            <person name="Hara-Nishimura I."/>
        </authorList>
    </citation>
    <scope>FUNCTION</scope>
    <scope>DISRUPTION PHENOTYPE</scope>
    <scope>SUBCELLULAR LOCATION</scope>
    <scope>MUTAGENESIS OF GLY-59</scope>
    <scope>INTERACTION WITH PYK10 COMPLEX</scope>
</reference>
<reference key="11">
    <citation type="journal article" date="2014" name="Plant J.">
        <title>Trafficking of the myrosinase-associated protein GLL23 requires NUC/MVP1/GOLD36/ERMO3 and the p24 protein CYB.</title>
        <authorList>
            <person name="Jancowski S."/>
            <person name="Catching A."/>
            <person name="Pighin J."/>
            <person name="Kudo T."/>
            <person name="Foissner I."/>
            <person name="Wasteneys G.O."/>
        </authorList>
    </citation>
    <scope>FUNCTION</scope>
    <scope>MUTAGENESIS OF GLY-341</scope>
</reference>
<name>GDL21_ARATH</name>
<sequence>MLLIPSFTANSNEPPPSKLSLSDLSMAILKSHFFLLFPLLLLHFHTVSFAQTLFVFGDGLYDAGNKQFLSQNRVDASFPPYGVTVGQATGRWSDGSIVPDYLAKFMGIPKISPILLTTADFSHGANFAIADATVLGSPPETMTLSQQVKKFSENKNKWTNQTRSEAIYLIYIGSDDYLSYAKSNPSPSDTQKQAFVDQVITTIKAEIKVVYGSGGRKFAFQNLAPLGCLPAVKQASGNVQECVKLPSEMAALHNKKLLQLLVELSRELNGFQYSFYDFFSSIQNRVIKSKTYTFETGNAACCGTGSINGSNCSAKNVCAKPEEYIFFDGKHLTQEANLQVGHLMWGADPEVIGPNNIRELMVLPLDITVILAGIQEAMAAMRPRQSNIESLYDIKKMESEMDNHWLYQVDKAISFMI</sequence>
<organism>
    <name type="scientific">Arabidopsis thaliana</name>
    <name type="common">Mouse-ear cress</name>
    <dbReference type="NCBI Taxonomy" id="3702"/>
    <lineage>
        <taxon>Eukaryota</taxon>
        <taxon>Viridiplantae</taxon>
        <taxon>Streptophyta</taxon>
        <taxon>Embryophyta</taxon>
        <taxon>Tracheophyta</taxon>
        <taxon>Spermatophyta</taxon>
        <taxon>Magnoliopsida</taxon>
        <taxon>eudicotyledons</taxon>
        <taxon>Gunneridae</taxon>
        <taxon>Pentapetalae</taxon>
        <taxon>rosids</taxon>
        <taxon>malvids</taxon>
        <taxon>Brassicales</taxon>
        <taxon>Brassicaceae</taxon>
        <taxon>Camelineae</taxon>
        <taxon>Arabidopsis</taxon>
    </lineage>
</organism>
<proteinExistence type="evidence at protein level"/>
<evidence type="ECO:0000250" key="1"/>
<evidence type="ECO:0000255" key="2"/>
<evidence type="ECO:0000269" key="3">
    <source>
    </source>
</evidence>
<evidence type="ECO:0000269" key="4">
    <source>
    </source>
</evidence>
<evidence type="ECO:0000269" key="5">
    <source>
    </source>
</evidence>
<evidence type="ECO:0000269" key="6">
    <source>
    </source>
</evidence>
<evidence type="ECO:0000305" key="7"/>
<keyword id="KW-0256">Endoplasmic reticulum</keyword>
<keyword id="KW-0325">Glycoprotein</keyword>
<keyword id="KW-1185">Reference proteome</keyword>
<keyword id="KW-0732">Signal</keyword>
<keyword id="KW-0926">Vacuole</keyword>
<feature type="signal peptide" evidence="2">
    <location>
        <begin position="1"/>
        <end position="50"/>
    </location>
</feature>
<feature type="chain" id="PRO_0000367363" description="Inactive GDSL esterase/lipase-like protein 25">
    <location>
        <begin position="51"/>
        <end position="417"/>
    </location>
</feature>
<feature type="active site" evidence="1">
    <location>
        <position position="331"/>
    </location>
</feature>
<feature type="glycosylation site" description="N-linked (GlcNAc...) asparagine" evidence="2">
    <location>
        <position position="160"/>
    </location>
</feature>
<feature type="glycosylation site" description="N-linked (GlcNAc...) asparagine" evidence="2">
    <location>
        <position position="308"/>
    </location>
</feature>
<feature type="glycosylation site" description="N-linked (GlcNAc...) asparagine" evidence="2">
    <location>
        <position position="311"/>
    </location>
</feature>
<feature type="mutagenesis site" description="In mvp1-1; defects in endoplasmic reticulum (ER) protein export and organizational defects in the ER." evidence="3">
    <original>G</original>
    <variation>E</variation>
    <location>
        <position position="57"/>
    </location>
</feature>
<feature type="mutagenesis site" description="Restored lipase activity, but no effect on ER morphology." evidence="5">
    <original>G</original>
    <variation>S</variation>
    <location>
        <position position="59"/>
    </location>
</feature>
<feature type="mutagenesis site" description="Defects in endoplasmic reticulum (ER) protein export and organizational defects in the ER." evidence="4">
    <original>P</original>
    <variation>L</variation>
    <location>
        <position position="80"/>
    </location>
</feature>
<feature type="mutagenesis site" description="In nuc; formation of large perinuclear aggregates accumulating GLL23." evidence="6">
    <original>G</original>
    <variation>R</variation>
    <location>
        <position position="341"/>
    </location>
</feature>
<feature type="sequence conflict" description="In Ref. 4; AAM65534." evidence="7" ref="4">
    <original>P</original>
    <variation>R</variation>
    <location>
        <position position="5"/>
    </location>
</feature>
<feature type="sequence conflict" description="In Ref. 4; AAM65534." evidence="7" ref="4">
    <original>N</original>
    <variation>I</variation>
    <location>
        <position position="10"/>
    </location>
</feature>
<feature type="sequence conflict" description="In Ref. 4; AAM65534." evidence="7" ref="4">
    <original>E</original>
    <variation>R</variation>
    <location>
        <position position="13"/>
    </location>
</feature>
<feature type="sequence conflict" description="In Ref. 4; AAM65534." evidence="7" ref="4">
    <original>L</original>
    <variation>V</variation>
    <location>
        <position position="116"/>
    </location>
</feature>
<feature type="sequence conflict" description="In Ref. 4; AAM65534." evidence="7" ref="4">
    <original>P</original>
    <variation>L</variation>
    <location>
        <position position="185"/>
    </location>
</feature>
<feature type="sequence conflict" description="In Ref. 4; AAM65534." evidence="7" ref="4">
    <original>T</original>
    <variation>N</variation>
    <location>
        <position position="190"/>
    </location>
</feature>
<feature type="sequence conflict" description="In Ref. 4; AAM65534." evidence="7" ref="4">
    <original>Q</original>
    <variation>E</variation>
    <location>
        <position position="240"/>
    </location>
</feature>
<feature type="sequence conflict" description="In Ref. 4; AAM65534." evidence="7" ref="4">
    <original>N</original>
    <variation>D</variation>
    <location>
        <position position="311"/>
    </location>
</feature>
<gene>
    <name type="primary">MVP1</name>
    <name type="synonym">ERMO3</name>
    <name type="synonym">GLL25</name>
    <name type="synonym">GOLD36</name>
    <name type="synonym">NUC</name>
    <name type="ordered locus">At1g54030</name>
    <name type="ORF">F15I1.11</name>
</gene>
<protein>
    <recommendedName>
        <fullName>Inactive GDSL esterase/lipase-like protein 25</fullName>
    </recommendedName>
    <alternativeName>
        <fullName>GDSL-like lipase 25</fullName>
    </alternativeName>
    <alternativeName>
        <fullName>Myrosinase-associated protein GLL25</fullName>
    </alternativeName>
    <alternativeName>
        <fullName>Protein ENDOPLASMIC RETICULUM MORPHOLOGY 3</fullName>
    </alternativeName>
    <alternativeName>
        <fullName>Protein GOLGI DEFECTS 36</fullName>
    </alternativeName>
    <alternativeName>
        <fullName>Protein MODIFIED VACUOLE PHENOTYPE 1</fullName>
    </alternativeName>
    <alternativeName>
        <fullName>Protein NUCLEAR CAGE</fullName>
    </alternativeName>
</protein>
<accession>Q7XA74</accession>
<accession>Q8LA76</accession>
<accession>Q9SYF9</accession>
<comment type="function">
    <text evidence="3 4 5 6">Involved in organization of the endomembrane system and is required for endoplasmic reticulum morphology and organelle distribution. May act by inhibiting the formation of PYK10 complex by binding to GLL23 and exporting it from the ER. Required for proper subcellular localization of myrosinase TGG2. Has no lipase or esterase activity.</text>
</comment>
<comment type="subunit">
    <text evidence="3 5">Interacts with the PYK10 complex and TGG2, but not with TGG1 or PEN2.</text>
</comment>
<comment type="subcellular location">
    <subcellularLocation>
        <location>Vacuole</location>
    </subcellularLocation>
    <subcellularLocation>
        <location>Endoplasmic reticulum</location>
    </subcellularLocation>
    <text>Also found in ER bodies. Retained in the ER when mutated.</text>
</comment>
<comment type="tissue specificity">
    <text evidence="3">Expressed throughout the seedling, rosette leaves, roots, inflorescence and imbibed seed, but not in pollen.</text>
</comment>
<comment type="developmental stage">
    <text evidence="3">Expressed during all developmental stages, with the highest accumulation in germinated seeds.</text>
</comment>
<comment type="induction">
    <text evidence="3">Up-regulated by methyl jasmonate and upon pathogen infection.</text>
</comment>
<comment type="disruption phenotype">
    <text evidence="3 4 5">Defects in endoplasmic reticulum (ER) protein export and organizational defects in the ER, including aggregation of ER around the nucleus. Increased sensitivity to salt.</text>
</comment>
<comment type="similarity">
    <text evidence="7">Belongs to the 'GDSL' lipolytic enzyme family.</text>
</comment>
<comment type="caution">
    <text evidence="7">Lacks the conserved active site 'GDSL' motif and has no lipase activity.</text>
</comment>
<comment type="sequence caution" evidence="7">
    <conflict type="erroneous gene model prediction">
        <sequence resource="EMBL-CDS" id="AAD25775"/>
    </conflict>
</comment>
<comment type="sequence caution" evidence="7">
    <conflict type="erroneous initiation">
        <sequence resource="EMBL-CDS" id="AAM65534"/>
    </conflict>
    <text>Truncated N-terminus.</text>
</comment>
<comment type="sequence caution" evidence="7">
    <conflict type="miscellaneous discrepancy">
        <sequence resource="EMBL-CDS" id="AAM65534"/>
    </conflict>
    <text>The stop codon at position 16 is created by sequencing errors.</text>
</comment>
<dbReference type="EMBL" id="AC006577">
    <property type="protein sequence ID" value="AAD25775.1"/>
    <property type="status" value="ALT_SEQ"/>
    <property type="molecule type" value="Genomic_DNA"/>
</dbReference>
<dbReference type="EMBL" id="CP002684">
    <property type="protein sequence ID" value="AEE33038.1"/>
    <property type="molecule type" value="Genomic_DNA"/>
</dbReference>
<dbReference type="EMBL" id="BT010163">
    <property type="protein sequence ID" value="AAQ22632.1"/>
    <property type="molecule type" value="mRNA"/>
</dbReference>
<dbReference type="EMBL" id="AY087988">
    <property type="protein sequence ID" value="AAM65534.1"/>
    <property type="status" value="ALT_SEQ"/>
    <property type="molecule type" value="mRNA"/>
</dbReference>
<dbReference type="PIR" id="H96580">
    <property type="entry name" value="H96580"/>
</dbReference>
<dbReference type="RefSeq" id="NP_175805.1">
    <property type="nucleotide sequence ID" value="NM_104280.4"/>
</dbReference>
<dbReference type="SMR" id="Q7XA74"/>
<dbReference type="BioGRID" id="27066">
    <property type="interactions" value="4"/>
</dbReference>
<dbReference type="FunCoup" id="Q7XA74">
    <property type="interactions" value="104"/>
</dbReference>
<dbReference type="IntAct" id="Q7XA74">
    <property type="interactions" value="1"/>
</dbReference>
<dbReference type="STRING" id="3702.Q7XA74"/>
<dbReference type="GlyCosmos" id="Q7XA74">
    <property type="glycosylation" value="3 sites, No reported glycans"/>
</dbReference>
<dbReference type="GlyGen" id="Q7XA74">
    <property type="glycosylation" value="4 sites"/>
</dbReference>
<dbReference type="PaxDb" id="3702-AT1G54030.1"/>
<dbReference type="ProteomicsDB" id="221920"/>
<dbReference type="EnsemblPlants" id="AT1G54030.1">
    <property type="protein sequence ID" value="AT1G54030.1"/>
    <property type="gene ID" value="AT1G54030"/>
</dbReference>
<dbReference type="GeneID" id="841841"/>
<dbReference type="Gramene" id="AT1G54030.1">
    <property type="protein sequence ID" value="AT1G54030.1"/>
    <property type="gene ID" value="AT1G54030"/>
</dbReference>
<dbReference type="KEGG" id="ath:AT1G54030"/>
<dbReference type="Araport" id="AT1G54030"/>
<dbReference type="TAIR" id="AT1G54030">
    <property type="gene designation" value="MVP1"/>
</dbReference>
<dbReference type="eggNOG" id="ENOG502S4IX">
    <property type="taxonomic scope" value="Eukaryota"/>
</dbReference>
<dbReference type="HOGENOM" id="CLU_015101_7_0_1"/>
<dbReference type="InParanoid" id="Q7XA74"/>
<dbReference type="OMA" id="CAKPEEY"/>
<dbReference type="PhylomeDB" id="Q7XA74"/>
<dbReference type="BioCyc" id="ARA:AT1G54030-MONOMER"/>
<dbReference type="PRO" id="PR:Q7XA74"/>
<dbReference type="Proteomes" id="UP000006548">
    <property type="component" value="Chromosome 1"/>
</dbReference>
<dbReference type="ExpressionAtlas" id="Q7XA74">
    <property type="expression patterns" value="baseline and differential"/>
</dbReference>
<dbReference type="GO" id="GO:0005783">
    <property type="term" value="C:endoplasmic reticulum"/>
    <property type="evidence" value="ECO:0000314"/>
    <property type="project" value="TAIR"/>
</dbReference>
<dbReference type="GO" id="GO:0010168">
    <property type="term" value="C:ER body"/>
    <property type="evidence" value="ECO:0000314"/>
    <property type="project" value="TAIR"/>
</dbReference>
<dbReference type="GO" id="GO:0000325">
    <property type="term" value="C:plant-type vacuole"/>
    <property type="evidence" value="ECO:0007005"/>
    <property type="project" value="TAIR"/>
</dbReference>
<dbReference type="GO" id="GO:0009705">
    <property type="term" value="C:plant-type vacuole membrane"/>
    <property type="evidence" value="ECO:0000314"/>
    <property type="project" value="TAIR"/>
</dbReference>
<dbReference type="GO" id="GO:0009506">
    <property type="term" value="C:plasmodesma"/>
    <property type="evidence" value="ECO:0007005"/>
    <property type="project" value="TAIR"/>
</dbReference>
<dbReference type="GO" id="GO:0005773">
    <property type="term" value="C:vacuole"/>
    <property type="evidence" value="ECO:0000314"/>
    <property type="project" value="TAIR"/>
</dbReference>
<dbReference type="GO" id="GO:0016788">
    <property type="term" value="F:hydrolase activity, acting on ester bonds"/>
    <property type="evidence" value="ECO:0007669"/>
    <property type="project" value="InterPro"/>
</dbReference>
<dbReference type="GO" id="GO:0007029">
    <property type="term" value="P:endoplasmic reticulum organization"/>
    <property type="evidence" value="ECO:0000315"/>
    <property type="project" value="TAIR"/>
</dbReference>
<dbReference type="GO" id="GO:0006886">
    <property type="term" value="P:intracellular protein transport"/>
    <property type="evidence" value="ECO:0000315"/>
    <property type="project" value="TAIR"/>
</dbReference>
<dbReference type="GO" id="GO:0032527">
    <property type="term" value="P:protein exit from endoplasmic reticulum"/>
    <property type="evidence" value="ECO:0000315"/>
    <property type="project" value="TAIR"/>
</dbReference>
<dbReference type="CDD" id="cd01837">
    <property type="entry name" value="SGNH_plant_lipase_like"/>
    <property type="match status" value="1"/>
</dbReference>
<dbReference type="FunFam" id="3.40.50.1110:FF:000026">
    <property type="entry name" value="GDSL esterase/lipase At3g14220"/>
    <property type="match status" value="1"/>
</dbReference>
<dbReference type="Gene3D" id="3.40.50.1110">
    <property type="entry name" value="SGNH hydrolase"/>
    <property type="match status" value="1"/>
</dbReference>
<dbReference type="InterPro" id="IPR001087">
    <property type="entry name" value="GDSL"/>
</dbReference>
<dbReference type="InterPro" id="IPR044552">
    <property type="entry name" value="GLIP1-5/GLL25"/>
</dbReference>
<dbReference type="InterPro" id="IPR036514">
    <property type="entry name" value="SGNH_hydro_sf"/>
</dbReference>
<dbReference type="InterPro" id="IPR035669">
    <property type="entry name" value="SGNH_plant_lipase-like"/>
</dbReference>
<dbReference type="PANTHER" id="PTHR45966">
    <property type="entry name" value="GDSL-LIKE LIPASE/ACYLHYDROLASE"/>
    <property type="match status" value="1"/>
</dbReference>
<dbReference type="PANTHER" id="PTHR45966:SF36">
    <property type="entry name" value="INACTIVE GDSL ESTERASE_LIPASE-LIKE PROTEIN 25"/>
    <property type="match status" value="1"/>
</dbReference>
<dbReference type="Pfam" id="PF00657">
    <property type="entry name" value="Lipase_GDSL"/>
    <property type="match status" value="1"/>
</dbReference>